<comment type="function">
    <text evidence="1">Catalyzes the reversible interconversion of serine and glycine with tetrahydrofolate (THF) serving as the one-carbon carrier. This reaction serves as the major source of one-carbon groups required for the biosynthesis of purines, thymidylate, methionine, and other important biomolecules. Also exhibits THF-independent aldolase activity toward beta-hydroxyamino acids, producing glycine and aldehydes, via a retro-aldol mechanism.</text>
</comment>
<comment type="catalytic activity">
    <reaction evidence="1">
        <text>(6R)-5,10-methylene-5,6,7,8-tetrahydrofolate + glycine + H2O = (6S)-5,6,7,8-tetrahydrofolate + L-serine</text>
        <dbReference type="Rhea" id="RHEA:15481"/>
        <dbReference type="ChEBI" id="CHEBI:15377"/>
        <dbReference type="ChEBI" id="CHEBI:15636"/>
        <dbReference type="ChEBI" id="CHEBI:33384"/>
        <dbReference type="ChEBI" id="CHEBI:57305"/>
        <dbReference type="ChEBI" id="CHEBI:57453"/>
        <dbReference type="EC" id="2.1.2.1"/>
    </reaction>
</comment>
<comment type="cofactor">
    <cofactor evidence="1">
        <name>pyridoxal 5'-phosphate</name>
        <dbReference type="ChEBI" id="CHEBI:597326"/>
    </cofactor>
</comment>
<comment type="pathway">
    <text evidence="1">One-carbon metabolism; tetrahydrofolate interconversion.</text>
</comment>
<comment type="pathway">
    <text evidence="1">Amino-acid biosynthesis; glycine biosynthesis; glycine from L-serine: step 1/1.</text>
</comment>
<comment type="subunit">
    <text evidence="1">Homodimer.</text>
</comment>
<comment type="subcellular location">
    <subcellularLocation>
        <location evidence="1">Cytoplasm</location>
    </subcellularLocation>
</comment>
<comment type="similarity">
    <text evidence="1">Belongs to the SHMT family.</text>
</comment>
<comment type="sequence caution" evidence="2">
    <conflict type="erroneous initiation">
        <sequence resource="EMBL-CDS" id="ABX20261"/>
    </conflict>
</comment>
<evidence type="ECO:0000255" key="1">
    <source>
        <dbReference type="HAMAP-Rule" id="MF_00051"/>
    </source>
</evidence>
<evidence type="ECO:0000305" key="2"/>
<dbReference type="EC" id="2.1.2.1" evidence="1"/>
<dbReference type="EMBL" id="CP000880">
    <property type="protein sequence ID" value="ABX20261.1"/>
    <property type="status" value="ALT_INIT"/>
    <property type="molecule type" value="Genomic_DNA"/>
</dbReference>
<dbReference type="SMR" id="A9MHI3"/>
<dbReference type="STRING" id="41514.SARI_00322"/>
<dbReference type="KEGG" id="ses:SARI_00322"/>
<dbReference type="HOGENOM" id="CLU_022477_2_1_6"/>
<dbReference type="UniPathway" id="UPA00193"/>
<dbReference type="UniPathway" id="UPA00288">
    <property type="reaction ID" value="UER01023"/>
</dbReference>
<dbReference type="Proteomes" id="UP000002084">
    <property type="component" value="Chromosome"/>
</dbReference>
<dbReference type="GO" id="GO:0005829">
    <property type="term" value="C:cytosol"/>
    <property type="evidence" value="ECO:0007669"/>
    <property type="project" value="TreeGrafter"/>
</dbReference>
<dbReference type="GO" id="GO:0004372">
    <property type="term" value="F:glycine hydroxymethyltransferase activity"/>
    <property type="evidence" value="ECO:0007669"/>
    <property type="project" value="UniProtKB-UniRule"/>
</dbReference>
<dbReference type="GO" id="GO:0030170">
    <property type="term" value="F:pyridoxal phosphate binding"/>
    <property type="evidence" value="ECO:0007669"/>
    <property type="project" value="UniProtKB-UniRule"/>
</dbReference>
<dbReference type="GO" id="GO:0019264">
    <property type="term" value="P:glycine biosynthetic process from serine"/>
    <property type="evidence" value="ECO:0007669"/>
    <property type="project" value="UniProtKB-UniRule"/>
</dbReference>
<dbReference type="GO" id="GO:0035999">
    <property type="term" value="P:tetrahydrofolate interconversion"/>
    <property type="evidence" value="ECO:0007669"/>
    <property type="project" value="UniProtKB-UniRule"/>
</dbReference>
<dbReference type="CDD" id="cd00378">
    <property type="entry name" value="SHMT"/>
    <property type="match status" value="1"/>
</dbReference>
<dbReference type="FunFam" id="3.40.640.10:FF:000001">
    <property type="entry name" value="Serine hydroxymethyltransferase"/>
    <property type="match status" value="1"/>
</dbReference>
<dbReference type="FunFam" id="3.90.1150.10:FF:000003">
    <property type="entry name" value="Serine hydroxymethyltransferase"/>
    <property type="match status" value="1"/>
</dbReference>
<dbReference type="Gene3D" id="3.90.1150.10">
    <property type="entry name" value="Aspartate Aminotransferase, domain 1"/>
    <property type="match status" value="1"/>
</dbReference>
<dbReference type="Gene3D" id="3.40.640.10">
    <property type="entry name" value="Type I PLP-dependent aspartate aminotransferase-like (Major domain)"/>
    <property type="match status" value="1"/>
</dbReference>
<dbReference type="HAMAP" id="MF_00051">
    <property type="entry name" value="SHMT"/>
    <property type="match status" value="1"/>
</dbReference>
<dbReference type="InterPro" id="IPR015424">
    <property type="entry name" value="PyrdxlP-dep_Trfase"/>
</dbReference>
<dbReference type="InterPro" id="IPR015421">
    <property type="entry name" value="PyrdxlP-dep_Trfase_major"/>
</dbReference>
<dbReference type="InterPro" id="IPR015422">
    <property type="entry name" value="PyrdxlP-dep_Trfase_small"/>
</dbReference>
<dbReference type="InterPro" id="IPR001085">
    <property type="entry name" value="Ser_HO-MeTrfase"/>
</dbReference>
<dbReference type="InterPro" id="IPR049943">
    <property type="entry name" value="Ser_HO-MeTrfase-like"/>
</dbReference>
<dbReference type="InterPro" id="IPR019798">
    <property type="entry name" value="Ser_HO-MeTrfase_PLP_BS"/>
</dbReference>
<dbReference type="InterPro" id="IPR039429">
    <property type="entry name" value="SHMT-like_dom"/>
</dbReference>
<dbReference type="NCBIfam" id="NF000586">
    <property type="entry name" value="PRK00011.1"/>
    <property type="match status" value="1"/>
</dbReference>
<dbReference type="PANTHER" id="PTHR11680">
    <property type="entry name" value="SERINE HYDROXYMETHYLTRANSFERASE"/>
    <property type="match status" value="1"/>
</dbReference>
<dbReference type="PANTHER" id="PTHR11680:SF50">
    <property type="entry name" value="SERINE HYDROXYMETHYLTRANSFERASE"/>
    <property type="match status" value="1"/>
</dbReference>
<dbReference type="Pfam" id="PF00464">
    <property type="entry name" value="SHMT"/>
    <property type="match status" value="1"/>
</dbReference>
<dbReference type="PIRSF" id="PIRSF000412">
    <property type="entry name" value="SHMT"/>
    <property type="match status" value="1"/>
</dbReference>
<dbReference type="SUPFAM" id="SSF53383">
    <property type="entry name" value="PLP-dependent transferases"/>
    <property type="match status" value="1"/>
</dbReference>
<dbReference type="PROSITE" id="PS00096">
    <property type="entry name" value="SHMT"/>
    <property type="match status" value="1"/>
</dbReference>
<organism>
    <name type="scientific">Salmonella arizonae (strain ATCC BAA-731 / CDC346-86 / RSK2980)</name>
    <dbReference type="NCBI Taxonomy" id="41514"/>
    <lineage>
        <taxon>Bacteria</taxon>
        <taxon>Pseudomonadati</taxon>
        <taxon>Pseudomonadota</taxon>
        <taxon>Gammaproteobacteria</taxon>
        <taxon>Enterobacterales</taxon>
        <taxon>Enterobacteriaceae</taxon>
        <taxon>Salmonella</taxon>
    </lineage>
</organism>
<gene>
    <name evidence="1" type="primary">glyA</name>
    <name type="ordered locus">SARI_00322</name>
</gene>
<name>GLYA_SALAR</name>
<accession>A9MHI3</accession>
<keyword id="KW-0028">Amino-acid biosynthesis</keyword>
<keyword id="KW-0963">Cytoplasm</keyword>
<keyword id="KW-0554">One-carbon metabolism</keyword>
<keyword id="KW-0663">Pyridoxal phosphate</keyword>
<keyword id="KW-1185">Reference proteome</keyword>
<keyword id="KW-0808">Transferase</keyword>
<proteinExistence type="inferred from homology"/>
<feature type="chain" id="PRO_0000369956" description="Serine hydroxymethyltransferase">
    <location>
        <begin position="1"/>
        <end position="417"/>
    </location>
</feature>
<feature type="binding site" evidence="1">
    <location>
        <position position="121"/>
    </location>
    <ligand>
        <name>(6S)-5,6,7,8-tetrahydrofolate</name>
        <dbReference type="ChEBI" id="CHEBI:57453"/>
    </ligand>
</feature>
<feature type="binding site" evidence="1">
    <location>
        <begin position="125"/>
        <end position="127"/>
    </location>
    <ligand>
        <name>(6S)-5,6,7,8-tetrahydrofolate</name>
        <dbReference type="ChEBI" id="CHEBI:57453"/>
    </ligand>
</feature>
<feature type="binding site" evidence="1">
    <location>
        <begin position="355"/>
        <end position="357"/>
    </location>
    <ligand>
        <name>(6S)-5,6,7,8-tetrahydrofolate</name>
        <dbReference type="ChEBI" id="CHEBI:57453"/>
    </ligand>
</feature>
<feature type="site" description="Plays an important role in substrate specificity" evidence="1">
    <location>
        <position position="228"/>
    </location>
</feature>
<feature type="modified residue" description="N6-(pyridoxal phosphate)lysine" evidence="1">
    <location>
        <position position="229"/>
    </location>
</feature>
<protein>
    <recommendedName>
        <fullName evidence="1">Serine hydroxymethyltransferase</fullName>
        <shortName evidence="1">SHMT</shortName>
        <shortName evidence="1">Serine methylase</shortName>
        <ecNumber evidence="1">2.1.2.1</ecNumber>
    </recommendedName>
</protein>
<reference key="1">
    <citation type="submission" date="2007-11" db="EMBL/GenBank/DDBJ databases">
        <authorList>
            <consortium name="The Salmonella enterica serovar Arizonae Genome Sequencing Project"/>
            <person name="McClelland M."/>
            <person name="Sanderson E.K."/>
            <person name="Porwollik S."/>
            <person name="Spieth J."/>
            <person name="Clifton W.S."/>
            <person name="Fulton R."/>
            <person name="Chunyan W."/>
            <person name="Wollam A."/>
            <person name="Shah N."/>
            <person name="Pepin K."/>
            <person name="Bhonagiri V."/>
            <person name="Nash W."/>
            <person name="Johnson M."/>
            <person name="Thiruvilangam P."/>
            <person name="Wilson R."/>
        </authorList>
    </citation>
    <scope>NUCLEOTIDE SEQUENCE [LARGE SCALE GENOMIC DNA]</scope>
    <source>
        <strain>ATCC BAA-731 / CDC346-86 / RSK2980</strain>
    </source>
</reference>
<sequence>MLKREMNIADYDAELWQAMEQEKVRQEEHIELIASENYTSPRVMQAQGSQLTNKYAEGYPGKRYYGGCEYVDIVEQLAIDRAKELFGADYANVQPHSGSQANFAVYTALLQPGDTVLGMNLAQGGHLTHGSPVNFSGKLYNIIPYGIDASGKIDYDDMAKQAQEHKPKMIIGGFSAYSGVVDWARMREIADSIGAYLFVDMAHVAGLIAAGVYPNPVPHAHVVTTTTHKTLAGPRGGLILAKGGDEDLYKKLNSAVFPSAQGGPLMHVIAAKAVALKEAMEPEFKVYQQQVAKNAKAMVEVFLNRGYKVVSGGTENHLFLLDLVDKNLTGKEADAALGRANITVNKNSVPNDPKSPFVTSGIRIGSPAVTRRGFKEAEVKELAGWMCDVLDNINDEATIERVKTKVLDICARFPVYA</sequence>